<reference key="1">
    <citation type="journal article" date="2004" name="Nat. Biotechnol.">
        <title>The genome sequence of the capnophilic rumen bacterium Mannheimia succiniciproducens.</title>
        <authorList>
            <person name="Hong S.H."/>
            <person name="Kim J.S."/>
            <person name="Lee S.Y."/>
            <person name="In Y.H."/>
            <person name="Choi S.S."/>
            <person name="Rih J.-K."/>
            <person name="Kim C.H."/>
            <person name="Jeong H."/>
            <person name="Hur C.G."/>
            <person name="Kim J.J."/>
        </authorList>
    </citation>
    <scope>NUCLEOTIDE SEQUENCE [LARGE SCALE GENOMIC DNA]</scope>
    <source>
        <strain>KCTC 0769BP / MBEL55E</strain>
    </source>
</reference>
<feature type="chain" id="PRO_0000172238" description="S-ribosylhomocysteine lyase">
    <location>
        <begin position="1"/>
        <end position="168"/>
    </location>
</feature>
<feature type="binding site" evidence="1">
    <location>
        <position position="54"/>
    </location>
    <ligand>
        <name>Fe cation</name>
        <dbReference type="ChEBI" id="CHEBI:24875"/>
    </ligand>
</feature>
<feature type="binding site" evidence="1">
    <location>
        <position position="58"/>
    </location>
    <ligand>
        <name>Fe cation</name>
        <dbReference type="ChEBI" id="CHEBI:24875"/>
    </ligand>
</feature>
<feature type="binding site" evidence="1">
    <location>
        <position position="128"/>
    </location>
    <ligand>
        <name>Fe cation</name>
        <dbReference type="ChEBI" id="CHEBI:24875"/>
    </ligand>
</feature>
<comment type="function">
    <text evidence="1">Involved in the synthesis of autoinducer 2 (AI-2) which is secreted by bacteria and is used to communicate both the cell density and the metabolic potential of the environment. The regulation of gene expression in response to changes in cell density is called quorum sensing. Catalyzes the transformation of S-ribosylhomocysteine (RHC) to homocysteine (HC) and 4,5-dihydroxy-2,3-pentadione (DPD).</text>
</comment>
<comment type="catalytic activity">
    <reaction evidence="1">
        <text>S-(5-deoxy-D-ribos-5-yl)-L-homocysteine = (S)-4,5-dihydroxypentane-2,3-dione + L-homocysteine</text>
        <dbReference type="Rhea" id="RHEA:17753"/>
        <dbReference type="ChEBI" id="CHEBI:29484"/>
        <dbReference type="ChEBI" id="CHEBI:58195"/>
        <dbReference type="ChEBI" id="CHEBI:58199"/>
        <dbReference type="EC" id="4.4.1.21"/>
    </reaction>
</comment>
<comment type="cofactor">
    <cofactor evidence="1">
        <name>Fe cation</name>
        <dbReference type="ChEBI" id="CHEBI:24875"/>
    </cofactor>
    <text evidence="1">Binds 1 Fe cation per subunit.</text>
</comment>
<comment type="subunit">
    <text evidence="1">Homodimer.</text>
</comment>
<comment type="similarity">
    <text evidence="1">Belongs to the LuxS family.</text>
</comment>
<protein>
    <recommendedName>
        <fullName evidence="1">S-ribosylhomocysteine lyase</fullName>
        <ecNumber evidence="1">4.4.1.21</ecNumber>
    </recommendedName>
    <alternativeName>
        <fullName evidence="1">AI-2 synthesis protein</fullName>
    </alternativeName>
    <alternativeName>
        <fullName evidence="1">Autoinducer-2 production protein LuxS</fullName>
    </alternativeName>
</protein>
<proteinExistence type="inferred from homology"/>
<organism>
    <name type="scientific">Mannheimia succiniciproducens (strain KCTC 0769BP / MBEL55E)</name>
    <dbReference type="NCBI Taxonomy" id="221988"/>
    <lineage>
        <taxon>Bacteria</taxon>
        <taxon>Pseudomonadati</taxon>
        <taxon>Pseudomonadota</taxon>
        <taxon>Gammaproteobacteria</taxon>
        <taxon>Pasteurellales</taxon>
        <taxon>Pasteurellaceae</taxon>
        <taxon>Basfia</taxon>
    </lineage>
</organism>
<accession>Q65VI4</accession>
<name>LUXS_MANSM</name>
<evidence type="ECO:0000255" key="1">
    <source>
        <dbReference type="HAMAP-Rule" id="MF_00091"/>
    </source>
</evidence>
<gene>
    <name evidence="1" type="primary">luxS</name>
    <name type="ordered locus">MS0419</name>
</gene>
<sequence>MPLLDSFKVDHTVMKAPAVRVAKIMRTPKGDDITVFDLRFCVPNKEILSPKGIHTLEHLFAGFMREHLNGDSVEIIDISPMGCRTGFYMSLIGTPNEQQVADAWLASMRDVLTVQDQSTIPELNIYQCGTYTEHSLADAHETARHVIEKGIAINKNEDLLLDEKLLNL</sequence>
<dbReference type="EC" id="4.4.1.21" evidence="1"/>
<dbReference type="EMBL" id="AE016827">
    <property type="protein sequence ID" value="AAU37026.1"/>
    <property type="molecule type" value="Genomic_DNA"/>
</dbReference>
<dbReference type="RefSeq" id="WP_011199601.1">
    <property type="nucleotide sequence ID" value="NC_006300.1"/>
</dbReference>
<dbReference type="SMR" id="Q65VI4"/>
<dbReference type="STRING" id="221988.MS0419"/>
<dbReference type="KEGG" id="msu:MS0419"/>
<dbReference type="eggNOG" id="COG1854">
    <property type="taxonomic scope" value="Bacteria"/>
</dbReference>
<dbReference type="HOGENOM" id="CLU_107531_2_0_6"/>
<dbReference type="OrthoDB" id="9788129at2"/>
<dbReference type="Proteomes" id="UP000000607">
    <property type="component" value="Chromosome"/>
</dbReference>
<dbReference type="GO" id="GO:0005506">
    <property type="term" value="F:iron ion binding"/>
    <property type="evidence" value="ECO:0007669"/>
    <property type="project" value="InterPro"/>
</dbReference>
<dbReference type="GO" id="GO:0043768">
    <property type="term" value="F:S-ribosylhomocysteine lyase activity"/>
    <property type="evidence" value="ECO:0007669"/>
    <property type="project" value="UniProtKB-UniRule"/>
</dbReference>
<dbReference type="GO" id="GO:0009372">
    <property type="term" value="P:quorum sensing"/>
    <property type="evidence" value="ECO:0007669"/>
    <property type="project" value="UniProtKB-UniRule"/>
</dbReference>
<dbReference type="Gene3D" id="3.30.1360.80">
    <property type="entry name" value="S-ribosylhomocysteinase (LuxS)"/>
    <property type="match status" value="1"/>
</dbReference>
<dbReference type="HAMAP" id="MF_00091">
    <property type="entry name" value="LuxS"/>
    <property type="match status" value="1"/>
</dbReference>
<dbReference type="InterPro" id="IPR037005">
    <property type="entry name" value="LuxS_sf"/>
</dbReference>
<dbReference type="InterPro" id="IPR011249">
    <property type="entry name" value="Metalloenz_LuxS/M16"/>
</dbReference>
<dbReference type="InterPro" id="IPR003815">
    <property type="entry name" value="S-ribosylhomocysteinase"/>
</dbReference>
<dbReference type="NCBIfam" id="NF002602">
    <property type="entry name" value="PRK02260.1-2"/>
    <property type="match status" value="1"/>
</dbReference>
<dbReference type="PANTHER" id="PTHR35799">
    <property type="entry name" value="S-RIBOSYLHOMOCYSTEINE LYASE"/>
    <property type="match status" value="1"/>
</dbReference>
<dbReference type="PANTHER" id="PTHR35799:SF1">
    <property type="entry name" value="S-RIBOSYLHOMOCYSTEINE LYASE"/>
    <property type="match status" value="1"/>
</dbReference>
<dbReference type="Pfam" id="PF02664">
    <property type="entry name" value="LuxS"/>
    <property type="match status" value="1"/>
</dbReference>
<dbReference type="PIRSF" id="PIRSF006160">
    <property type="entry name" value="AI2"/>
    <property type="match status" value="1"/>
</dbReference>
<dbReference type="PRINTS" id="PR01487">
    <property type="entry name" value="LUXSPROTEIN"/>
</dbReference>
<dbReference type="SUPFAM" id="SSF63411">
    <property type="entry name" value="LuxS/MPP-like metallohydrolase"/>
    <property type="match status" value="1"/>
</dbReference>
<keyword id="KW-0071">Autoinducer synthesis</keyword>
<keyword id="KW-0408">Iron</keyword>
<keyword id="KW-0456">Lyase</keyword>
<keyword id="KW-0479">Metal-binding</keyword>
<keyword id="KW-0673">Quorum sensing</keyword>